<keyword id="KW-1003">Cell membrane</keyword>
<keyword id="KW-0472">Membrane</keyword>
<keyword id="KW-0812">Transmembrane</keyword>
<keyword id="KW-1133">Transmembrane helix</keyword>
<proteinExistence type="inferred from homology"/>
<comment type="subcellular location">
    <subcellularLocation>
        <location evidence="1">Cell membrane</location>
        <topology evidence="1">Multi-pass membrane protein</topology>
    </subcellularLocation>
</comment>
<comment type="similarity">
    <text evidence="1">Belongs to the UPF0756 family.</text>
</comment>
<feature type="chain" id="PRO_0000388807" description="UPF0756 membrane protein ACICU_02320">
    <location>
        <begin position="1"/>
        <end position="150"/>
    </location>
</feature>
<feature type="transmembrane region" description="Helical" evidence="1">
    <location>
        <begin position="1"/>
        <end position="21"/>
    </location>
</feature>
<feature type="transmembrane region" description="Helical" evidence="1">
    <location>
        <begin position="45"/>
        <end position="65"/>
    </location>
</feature>
<feature type="transmembrane region" description="Helical" evidence="1">
    <location>
        <begin position="83"/>
        <end position="103"/>
    </location>
</feature>
<feature type="transmembrane region" description="Helical" evidence="1">
    <location>
        <begin position="115"/>
        <end position="135"/>
    </location>
</feature>
<gene>
    <name type="ordered locus">ACICU_02320</name>
</gene>
<accession>B2HTU4</accession>
<dbReference type="EMBL" id="CP000863">
    <property type="protein sequence ID" value="ACC57632.1"/>
    <property type="molecule type" value="Genomic_DNA"/>
</dbReference>
<dbReference type="RefSeq" id="WP_000880865.1">
    <property type="nucleotide sequence ID" value="NZ_CP031380.1"/>
</dbReference>
<dbReference type="KEGG" id="abc:ACICU_02320"/>
<dbReference type="HOGENOM" id="CLU_125889_0_0_6"/>
<dbReference type="Proteomes" id="UP000008839">
    <property type="component" value="Chromosome"/>
</dbReference>
<dbReference type="GO" id="GO:0005886">
    <property type="term" value="C:plasma membrane"/>
    <property type="evidence" value="ECO:0007669"/>
    <property type="project" value="UniProtKB-SubCell"/>
</dbReference>
<dbReference type="HAMAP" id="MF_01874">
    <property type="entry name" value="UPF0756"/>
    <property type="match status" value="1"/>
</dbReference>
<dbReference type="InterPro" id="IPR007382">
    <property type="entry name" value="UPF0756_TM"/>
</dbReference>
<dbReference type="PANTHER" id="PTHR38452">
    <property type="entry name" value="UPF0756 MEMBRANE PROTEIN YEAL"/>
    <property type="match status" value="1"/>
</dbReference>
<dbReference type="PANTHER" id="PTHR38452:SF1">
    <property type="entry name" value="UPF0756 MEMBRANE PROTEIN YEAL"/>
    <property type="match status" value="1"/>
</dbReference>
<dbReference type="Pfam" id="PF04284">
    <property type="entry name" value="DUF441"/>
    <property type="match status" value="1"/>
</dbReference>
<name>Y2320_ACIBC</name>
<reference key="1">
    <citation type="journal article" date="2008" name="Antimicrob. Agents Chemother.">
        <title>Whole-genome pyrosequencing of an epidemic multidrug-resistant Acinetobacter baumannii strain belonging to the European clone II group.</title>
        <authorList>
            <person name="Iacono M."/>
            <person name="Villa L."/>
            <person name="Fortini D."/>
            <person name="Bordoni R."/>
            <person name="Imperi F."/>
            <person name="Bonnal R.J."/>
            <person name="Sicheritz-Ponten T."/>
            <person name="De Bellis G."/>
            <person name="Visca P."/>
            <person name="Cassone A."/>
            <person name="Carattoli A."/>
        </authorList>
    </citation>
    <scope>NUCLEOTIDE SEQUENCE [LARGE SCALE GENOMIC DNA]</scope>
    <source>
        <strain>ACICU</strain>
    </source>
</reference>
<organism>
    <name type="scientific">Acinetobacter baumannii (strain ACICU)</name>
    <dbReference type="NCBI Taxonomy" id="405416"/>
    <lineage>
        <taxon>Bacteria</taxon>
        <taxon>Pseudomonadati</taxon>
        <taxon>Pseudomonadota</taxon>
        <taxon>Gammaproteobacteria</taxon>
        <taxon>Moraxellales</taxon>
        <taxon>Moraxellaceae</taxon>
        <taxon>Acinetobacter</taxon>
        <taxon>Acinetobacter calcoaceticus/baumannii complex</taxon>
    </lineage>
</organism>
<sequence length="150" mass="15395">MLAQFYVNLVVLLVLLICGLLSQNAAVTIAAGVLIVIKITPLNQFFPYIQAHGLNLGILILTIGVLTPIASGKLSGESILKSFISFKSLVAIAIGLLVAWLGGRGVKLMSSQPDVVAGLLIGTVAGVALLRGVPVGPLIAAGLLSLFIGK</sequence>
<evidence type="ECO:0000255" key="1">
    <source>
        <dbReference type="HAMAP-Rule" id="MF_01874"/>
    </source>
</evidence>
<protein>
    <recommendedName>
        <fullName evidence="1">UPF0756 membrane protein ACICU_02320</fullName>
    </recommendedName>
</protein>